<dbReference type="EMBL" id="AK093042">
    <property type="status" value="NOT_ANNOTATED_CDS"/>
    <property type="molecule type" value="mRNA"/>
</dbReference>
<dbReference type="EMBL" id="AC136604">
    <property type="status" value="NOT_ANNOTATED_CDS"/>
    <property type="molecule type" value="Genomic_DNA"/>
</dbReference>
<dbReference type="BioMuta" id="-"/>
<dbReference type="MassIVE" id="Q8NA96"/>
<dbReference type="PeptideAtlas" id="Q8NA96"/>
<dbReference type="AGR" id="HGNC:27753"/>
<dbReference type="neXtProt" id="NX_Q8NA96"/>
<dbReference type="InParanoid" id="Q8NA96"/>
<dbReference type="PAN-GO" id="Q8NA96">
    <property type="GO annotations" value="0 GO annotations based on evolutionary models"/>
</dbReference>
<dbReference type="PhylomeDB" id="Q8NA96"/>
<dbReference type="Pharos" id="Q8NA96">
    <property type="development level" value="Tdark"/>
</dbReference>
<dbReference type="Proteomes" id="UP000005640">
    <property type="component" value="Unplaced"/>
</dbReference>
<dbReference type="RNAct" id="Q8NA96">
    <property type="molecule type" value="protein"/>
</dbReference>
<comment type="caution">
    <text evidence="2">Could be the product of a pseudogene.</text>
</comment>
<protein>
    <recommendedName>
        <fullName>Putative uncharacterized protein FLJ35723</fullName>
    </recommendedName>
</protein>
<name>YE027_HUMAN</name>
<organism>
    <name type="scientific">Homo sapiens</name>
    <name type="common">Human</name>
    <dbReference type="NCBI Taxonomy" id="9606"/>
    <lineage>
        <taxon>Eukaryota</taxon>
        <taxon>Metazoa</taxon>
        <taxon>Chordata</taxon>
        <taxon>Craniata</taxon>
        <taxon>Vertebrata</taxon>
        <taxon>Euteleostomi</taxon>
        <taxon>Mammalia</taxon>
        <taxon>Eutheria</taxon>
        <taxon>Euarchontoglires</taxon>
        <taxon>Primates</taxon>
        <taxon>Haplorrhini</taxon>
        <taxon>Catarrhini</taxon>
        <taxon>Hominidae</taxon>
        <taxon>Homo</taxon>
    </lineage>
</organism>
<accession>Q8NA96</accession>
<proteinExistence type="uncertain"/>
<feature type="chain" id="PRO_0000342656" description="Putative uncharacterized protein FLJ35723">
    <location>
        <begin position="1"/>
        <end position="180"/>
    </location>
</feature>
<feature type="region of interest" description="Disordered" evidence="1">
    <location>
        <begin position="1"/>
        <end position="93"/>
    </location>
</feature>
<feature type="compositionally biased region" description="Low complexity" evidence="1">
    <location>
        <begin position="9"/>
        <end position="25"/>
    </location>
</feature>
<feature type="compositionally biased region" description="Low complexity" evidence="1">
    <location>
        <begin position="47"/>
        <end position="64"/>
    </location>
</feature>
<feature type="sequence conflict" description="In Ref. 1; AK093042." evidence="2" ref="1">
    <original>A</original>
    <variation>T</variation>
    <location>
        <position position="115"/>
    </location>
</feature>
<feature type="sequence conflict" description="In Ref. 1; AK093042." evidence="2" ref="1">
    <original>R</original>
    <variation>H</variation>
    <location>
        <position position="118"/>
    </location>
</feature>
<feature type="sequence conflict" description="In Ref. 1; AK093042." evidence="2" ref="1">
    <original>R</original>
    <variation>Q</variation>
    <location>
        <position position="131"/>
    </location>
</feature>
<keyword id="KW-1267">Proteomics identification</keyword>
<keyword id="KW-1185">Reference proteome</keyword>
<sequence>MPSSVPKTSIESLGSPSSLSSSQASEPLCPLKHPSHRPPASTLSPNLTSSTESLGYLSSLSSSQPPEPLRPLECPSHKPCGRSLPRRRNPGWVSWSDSMQADSETDAIICPMCKAPERSCPHTWWVPSSPRVIRGVGRCSDPNLGLSWRQEAARAWCHCTSSQYPFKHPNLPTHLPKASF</sequence>
<evidence type="ECO:0000256" key="1">
    <source>
        <dbReference type="SAM" id="MobiDB-lite"/>
    </source>
</evidence>
<evidence type="ECO:0000305" key="2"/>
<reference key="1">
    <citation type="journal article" date="2004" name="Nat. Genet.">
        <title>Complete sequencing and characterization of 21,243 full-length human cDNAs.</title>
        <authorList>
            <person name="Ota T."/>
            <person name="Suzuki Y."/>
            <person name="Nishikawa T."/>
            <person name="Otsuki T."/>
            <person name="Sugiyama T."/>
            <person name="Irie R."/>
            <person name="Wakamatsu A."/>
            <person name="Hayashi K."/>
            <person name="Sato H."/>
            <person name="Nagai K."/>
            <person name="Kimura K."/>
            <person name="Makita H."/>
            <person name="Sekine M."/>
            <person name="Obayashi M."/>
            <person name="Nishi T."/>
            <person name="Shibahara T."/>
            <person name="Tanaka T."/>
            <person name="Ishii S."/>
            <person name="Yamamoto J."/>
            <person name="Saito K."/>
            <person name="Kawai Y."/>
            <person name="Isono Y."/>
            <person name="Nakamura Y."/>
            <person name="Nagahari K."/>
            <person name="Murakami K."/>
            <person name="Yasuda T."/>
            <person name="Iwayanagi T."/>
            <person name="Wagatsuma M."/>
            <person name="Shiratori A."/>
            <person name="Sudo H."/>
            <person name="Hosoiri T."/>
            <person name="Kaku Y."/>
            <person name="Kodaira H."/>
            <person name="Kondo H."/>
            <person name="Sugawara M."/>
            <person name="Takahashi M."/>
            <person name="Kanda K."/>
            <person name="Yokoi T."/>
            <person name="Furuya T."/>
            <person name="Kikkawa E."/>
            <person name="Omura Y."/>
            <person name="Abe K."/>
            <person name="Kamihara K."/>
            <person name="Katsuta N."/>
            <person name="Sato K."/>
            <person name="Tanikawa M."/>
            <person name="Yamazaki M."/>
            <person name="Ninomiya K."/>
            <person name="Ishibashi T."/>
            <person name="Yamashita H."/>
            <person name="Murakawa K."/>
            <person name="Fujimori K."/>
            <person name="Tanai H."/>
            <person name="Kimata M."/>
            <person name="Watanabe M."/>
            <person name="Hiraoka S."/>
            <person name="Chiba Y."/>
            <person name="Ishida S."/>
            <person name="Ono Y."/>
            <person name="Takiguchi S."/>
            <person name="Watanabe S."/>
            <person name="Yosida M."/>
            <person name="Hotuta T."/>
            <person name="Kusano J."/>
            <person name="Kanehori K."/>
            <person name="Takahashi-Fujii A."/>
            <person name="Hara H."/>
            <person name="Tanase T.-O."/>
            <person name="Nomura Y."/>
            <person name="Togiya S."/>
            <person name="Komai F."/>
            <person name="Hara R."/>
            <person name="Takeuchi K."/>
            <person name="Arita M."/>
            <person name="Imose N."/>
            <person name="Musashino K."/>
            <person name="Yuuki H."/>
            <person name="Oshima A."/>
            <person name="Sasaki N."/>
            <person name="Aotsuka S."/>
            <person name="Yoshikawa Y."/>
            <person name="Matsunawa H."/>
            <person name="Ichihara T."/>
            <person name="Shiohata N."/>
            <person name="Sano S."/>
            <person name="Moriya S."/>
            <person name="Momiyama H."/>
            <person name="Satoh N."/>
            <person name="Takami S."/>
            <person name="Terashima Y."/>
            <person name="Suzuki O."/>
            <person name="Nakagawa S."/>
            <person name="Senoh A."/>
            <person name="Mizoguchi H."/>
            <person name="Goto Y."/>
            <person name="Shimizu F."/>
            <person name="Wakebe H."/>
            <person name="Hishigaki H."/>
            <person name="Watanabe T."/>
            <person name="Sugiyama A."/>
            <person name="Takemoto M."/>
            <person name="Kawakami B."/>
            <person name="Yamazaki M."/>
            <person name="Watanabe K."/>
            <person name="Kumagai A."/>
            <person name="Itakura S."/>
            <person name="Fukuzumi Y."/>
            <person name="Fujimori Y."/>
            <person name="Komiyama M."/>
            <person name="Tashiro H."/>
            <person name="Tanigami A."/>
            <person name="Fujiwara T."/>
            <person name="Ono T."/>
            <person name="Yamada K."/>
            <person name="Fujii Y."/>
            <person name="Ozaki K."/>
            <person name="Hirao M."/>
            <person name="Ohmori Y."/>
            <person name="Kawabata A."/>
            <person name="Hikiji T."/>
            <person name="Kobatake N."/>
            <person name="Inagaki H."/>
            <person name="Ikema Y."/>
            <person name="Okamoto S."/>
            <person name="Okitani R."/>
            <person name="Kawakami T."/>
            <person name="Noguchi S."/>
            <person name="Itoh T."/>
            <person name="Shigeta K."/>
            <person name="Senba T."/>
            <person name="Matsumura K."/>
            <person name="Nakajima Y."/>
            <person name="Mizuno T."/>
            <person name="Morinaga M."/>
            <person name="Sasaki M."/>
            <person name="Togashi T."/>
            <person name="Oyama M."/>
            <person name="Hata H."/>
            <person name="Watanabe M."/>
            <person name="Komatsu T."/>
            <person name="Mizushima-Sugano J."/>
            <person name="Satoh T."/>
            <person name="Shirai Y."/>
            <person name="Takahashi Y."/>
            <person name="Nakagawa K."/>
            <person name="Okumura K."/>
            <person name="Nagase T."/>
            <person name="Nomura N."/>
            <person name="Kikuchi H."/>
            <person name="Masuho Y."/>
            <person name="Yamashita R."/>
            <person name="Nakai K."/>
            <person name="Yada T."/>
            <person name="Nakamura Y."/>
            <person name="Ohara O."/>
            <person name="Isogai T."/>
            <person name="Sugano S."/>
        </authorList>
    </citation>
    <scope>NUCLEOTIDE SEQUENCE [LARGE SCALE MRNA]</scope>
    <source>
        <tissue>Testis</tissue>
    </source>
</reference>
<reference key="2">
    <citation type="journal article" date="2004" name="Nature">
        <title>The DNA sequence and comparative analysis of human chromosome 5.</title>
        <authorList>
            <person name="Schmutz J."/>
            <person name="Martin J."/>
            <person name="Terry A."/>
            <person name="Couronne O."/>
            <person name="Grimwood J."/>
            <person name="Lowry S."/>
            <person name="Gordon L.A."/>
            <person name="Scott D."/>
            <person name="Xie G."/>
            <person name="Huang W."/>
            <person name="Hellsten U."/>
            <person name="Tran-Gyamfi M."/>
            <person name="She X."/>
            <person name="Prabhakar S."/>
            <person name="Aerts A."/>
            <person name="Altherr M."/>
            <person name="Bajorek E."/>
            <person name="Black S."/>
            <person name="Branscomb E."/>
            <person name="Caoile C."/>
            <person name="Challacombe J.F."/>
            <person name="Chan Y.M."/>
            <person name="Denys M."/>
            <person name="Detter J.C."/>
            <person name="Escobar J."/>
            <person name="Flowers D."/>
            <person name="Fotopulos D."/>
            <person name="Glavina T."/>
            <person name="Gomez M."/>
            <person name="Gonzales E."/>
            <person name="Goodstein D."/>
            <person name="Grigoriev I."/>
            <person name="Groza M."/>
            <person name="Hammon N."/>
            <person name="Hawkins T."/>
            <person name="Haydu L."/>
            <person name="Israni S."/>
            <person name="Jett J."/>
            <person name="Kadner K."/>
            <person name="Kimball H."/>
            <person name="Kobayashi A."/>
            <person name="Lopez F."/>
            <person name="Lou Y."/>
            <person name="Martinez D."/>
            <person name="Medina C."/>
            <person name="Morgan J."/>
            <person name="Nandkeshwar R."/>
            <person name="Noonan J.P."/>
            <person name="Pitluck S."/>
            <person name="Pollard M."/>
            <person name="Predki P."/>
            <person name="Priest J."/>
            <person name="Ramirez L."/>
            <person name="Retterer J."/>
            <person name="Rodriguez A."/>
            <person name="Rogers S."/>
            <person name="Salamov A."/>
            <person name="Salazar A."/>
            <person name="Thayer N."/>
            <person name="Tice H."/>
            <person name="Tsai M."/>
            <person name="Ustaszewska A."/>
            <person name="Vo N."/>
            <person name="Wheeler J."/>
            <person name="Wu K."/>
            <person name="Yang J."/>
            <person name="Dickson M."/>
            <person name="Cheng J.-F."/>
            <person name="Eichler E.E."/>
            <person name="Olsen A."/>
            <person name="Pennacchio L.A."/>
            <person name="Rokhsar D.S."/>
            <person name="Richardson P."/>
            <person name="Lucas S.M."/>
            <person name="Myers R.M."/>
            <person name="Rubin E.M."/>
        </authorList>
    </citation>
    <scope>NUCLEOTIDE SEQUENCE [LARGE SCALE GENOMIC DNA]</scope>
</reference>